<gene>
    <name type="primary">RBP47C</name>
    <name type="ordered locus">At1g47490</name>
    <name type="ORF">F16N3.24</name>
</gene>
<feature type="chain" id="PRO_0000415769" description="Polyadenylate-binding protein RBP47C">
    <location>
        <begin position="1"/>
        <end position="432"/>
    </location>
</feature>
<feature type="domain" description="RRM 1" evidence="2">
    <location>
        <begin position="101"/>
        <end position="183"/>
    </location>
</feature>
<feature type="domain" description="RRM 2" evidence="2">
    <location>
        <begin position="197"/>
        <end position="276"/>
    </location>
</feature>
<feature type="domain" description="RRM 3" evidence="2">
    <location>
        <begin position="304"/>
        <end position="376"/>
    </location>
</feature>
<feature type="region of interest" description="Disordered" evidence="3">
    <location>
        <begin position="1"/>
        <end position="55"/>
    </location>
</feature>
<feature type="region of interest" description="Disordered" evidence="3">
    <location>
        <begin position="271"/>
        <end position="293"/>
    </location>
</feature>
<feature type="compositionally biased region" description="Pro residues" evidence="3">
    <location>
        <begin position="22"/>
        <end position="32"/>
    </location>
</feature>
<feature type="compositionally biased region" description="Polar residues" evidence="3">
    <location>
        <begin position="277"/>
        <end position="286"/>
    </location>
</feature>
<feature type="splice variant" id="VSP_042356" description="In isoform 2." evidence="5">
    <original>IFVGG</original>
    <variation>VIVFP</variation>
    <location>
        <begin position="306"/>
        <end position="310"/>
    </location>
</feature>
<feature type="splice variant" id="VSP_042357" description="In isoform 2." evidence="5">
    <location>
        <begin position="311"/>
        <end position="432"/>
    </location>
</feature>
<proteinExistence type="evidence at transcript level"/>
<reference key="1">
    <citation type="journal article" date="2000" name="Nature">
        <title>Sequence and analysis of chromosome 1 of the plant Arabidopsis thaliana.</title>
        <authorList>
            <person name="Theologis A."/>
            <person name="Ecker J.R."/>
            <person name="Palm C.J."/>
            <person name="Federspiel N.A."/>
            <person name="Kaul S."/>
            <person name="White O."/>
            <person name="Alonso J."/>
            <person name="Altafi H."/>
            <person name="Araujo R."/>
            <person name="Bowman C.L."/>
            <person name="Brooks S.Y."/>
            <person name="Buehler E."/>
            <person name="Chan A."/>
            <person name="Chao Q."/>
            <person name="Chen H."/>
            <person name="Cheuk R.F."/>
            <person name="Chin C.W."/>
            <person name="Chung M.K."/>
            <person name="Conn L."/>
            <person name="Conway A.B."/>
            <person name="Conway A.R."/>
            <person name="Creasy T.H."/>
            <person name="Dewar K."/>
            <person name="Dunn P."/>
            <person name="Etgu P."/>
            <person name="Feldblyum T.V."/>
            <person name="Feng J.-D."/>
            <person name="Fong B."/>
            <person name="Fujii C.Y."/>
            <person name="Gill J.E."/>
            <person name="Goldsmith A.D."/>
            <person name="Haas B."/>
            <person name="Hansen N.F."/>
            <person name="Hughes B."/>
            <person name="Huizar L."/>
            <person name="Hunter J.L."/>
            <person name="Jenkins J."/>
            <person name="Johnson-Hopson C."/>
            <person name="Khan S."/>
            <person name="Khaykin E."/>
            <person name="Kim C.J."/>
            <person name="Koo H.L."/>
            <person name="Kremenetskaia I."/>
            <person name="Kurtz D.B."/>
            <person name="Kwan A."/>
            <person name="Lam B."/>
            <person name="Langin-Hooper S."/>
            <person name="Lee A."/>
            <person name="Lee J.M."/>
            <person name="Lenz C.A."/>
            <person name="Li J.H."/>
            <person name="Li Y.-P."/>
            <person name="Lin X."/>
            <person name="Liu S.X."/>
            <person name="Liu Z.A."/>
            <person name="Luros J.S."/>
            <person name="Maiti R."/>
            <person name="Marziali A."/>
            <person name="Militscher J."/>
            <person name="Miranda M."/>
            <person name="Nguyen M."/>
            <person name="Nierman W.C."/>
            <person name="Osborne B.I."/>
            <person name="Pai G."/>
            <person name="Peterson J."/>
            <person name="Pham P.K."/>
            <person name="Rizzo M."/>
            <person name="Rooney T."/>
            <person name="Rowley D."/>
            <person name="Sakano H."/>
            <person name="Salzberg S.L."/>
            <person name="Schwartz J.R."/>
            <person name="Shinn P."/>
            <person name="Southwick A.M."/>
            <person name="Sun H."/>
            <person name="Tallon L.J."/>
            <person name="Tambunga G."/>
            <person name="Toriumi M.J."/>
            <person name="Town C.D."/>
            <person name="Utterback T."/>
            <person name="Van Aken S."/>
            <person name="Vaysberg M."/>
            <person name="Vysotskaia V.S."/>
            <person name="Walker M."/>
            <person name="Wu D."/>
            <person name="Yu G."/>
            <person name="Fraser C.M."/>
            <person name="Venter J.C."/>
            <person name="Davis R.W."/>
        </authorList>
    </citation>
    <scope>NUCLEOTIDE SEQUENCE [LARGE SCALE GENOMIC DNA]</scope>
    <source>
        <strain>cv. Columbia</strain>
    </source>
</reference>
<reference key="2">
    <citation type="journal article" date="2017" name="Plant J.">
        <title>Araport11: a complete reannotation of the Arabidopsis thaliana reference genome.</title>
        <authorList>
            <person name="Cheng C.Y."/>
            <person name="Krishnakumar V."/>
            <person name="Chan A.P."/>
            <person name="Thibaud-Nissen F."/>
            <person name="Schobel S."/>
            <person name="Town C.D."/>
        </authorList>
    </citation>
    <scope>GENOME REANNOTATION</scope>
    <source>
        <strain>cv. Columbia</strain>
    </source>
</reference>
<reference key="3">
    <citation type="journal article" date="2003" name="Science">
        <title>Empirical analysis of transcriptional activity in the Arabidopsis genome.</title>
        <authorList>
            <person name="Yamada K."/>
            <person name="Lim J."/>
            <person name="Dale J.M."/>
            <person name="Chen H."/>
            <person name="Shinn P."/>
            <person name="Palm C.J."/>
            <person name="Southwick A.M."/>
            <person name="Wu H.C."/>
            <person name="Kim C.J."/>
            <person name="Nguyen M."/>
            <person name="Pham P.K."/>
            <person name="Cheuk R.F."/>
            <person name="Karlin-Newmann G."/>
            <person name="Liu S.X."/>
            <person name="Lam B."/>
            <person name="Sakano H."/>
            <person name="Wu T."/>
            <person name="Yu G."/>
            <person name="Miranda M."/>
            <person name="Quach H.L."/>
            <person name="Tripp M."/>
            <person name="Chang C.H."/>
            <person name="Lee J.M."/>
            <person name="Toriumi M.J."/>
            <person name="Chan M.M."/>
            <person name="Tang C.C."/>
            <person name="Onodera C.S."/>
            <person name="Deng J.M."/>
            <person name="Akiyama K."/>
            <person name="Ansari Y."/>
            <person name="Arakawa T."/>
            <person name="Banh J."/>
            <person name="Banno F."/>
            <person name="Bowser L."/>
            <person name="Brooks S.Y."/>
            <person name="Carninci P."/>
            <person name="Chao Q."/>
            <person name="Choy N."/>
            <person name="Enju A."/>
            <person name="Goldsmith A.D."/>
            <person name="Gurjal M."/>
            <person name="Hansen N.F."/>
            <person name="Hayashizaki Y."/>
            <person name="Johnson-Hopson C."/>
            <person name="Hsuan V.W."/>
            <person name="Iida K."/>
            <person name="Karnes M."/>
            <person name="Khan S."/>
            <person name="Koesema E."/>
            <person name="Ishida J."/>
            <person name="Jiang P.X."/>
            <person name="Jones T."/>
            <person name="Kawai J."/>
            <person name="Kamiya A."/>
            <person name="Meyers C."/>
            <person name="Nakajima M."/>
            <person name="Narusaka M."/>
            <person name="Seki M."/>
            <person name="Sakurai T."/>
            <person name="Satou M."/>
            <person name="Tamse R."/>
            <person name="Vaysberg M."/>
            <person name="Wallender E.K."/>
            <person name="Wong C."/>
            <person name="Yamamura Y."/>
            <person name="Yuan S."/>
            <person name="Shinozaki K."/>
            <person name="Davis R.W."/>
            <person name="Theologis A."/>
            <person name="Ecker J.R."/>
        </authorList>
    </citation>
    <scope>NUCLEOTIDE SEQUENCE [LARGE SCALE MRNA] (ISOFORM 1)</scope>
    <source>
        <strain>cv. Columbia</strain>
    </source>
</reference>
<reference key="4">
    <citation type="journal article" date="2004" name="Genome Res.">
        <title>Whole genome sequence comparisons and 'full-length' cDNA sequences: a combined approach to evaluate and improve Arabidopsis genome annotation.</title>
        <authorList>
            <person name="Castelli V."/>
            <person name="Aury J.-M."/>
            <person name="Jaillon O."/>
            <person name="Wincker P."/>
            <person name="Clepet C."/>
            <person name="Menard M."/>
            <person name="Cruaud C."/>
            <person name="Quetier F."/>
            <person name="Scarpelli C."/>
            <person name="Schaechter V."/>
            <person name="Temple G."/>
            <person name="Caboche M."/>
            <person name="Weissenbach J."/>
            <person name="Salanoubat M."/>
        </authorList>
    </citation>
    <scope>NUCLEOTIDE SEQUENCE [LARGE SCALE MRNA] OF 11-310 (ISOFORM 2)</scope>
    <source>
        <strain>cv. Columbia</strain>
    </source>
</reference>
<reference key="5">
    <citation type="journal article" date="2000" name="RNA">
        <title>RBP45 and RBP47, two oligouridylate-specific hnRNP-like proteins interacting with poly(A)+ RNA in nuclei of plant cells.</title>
        <authorList>
            <person name="Lorkovic Z.J."/>
            <person name="Wieczorek Kirk D.A."/>
            <person name="Klahre U."/>
            <person name="Hemmings-Mieszczak M."/>
            <person name="Filipowicz W."/>
        </authorList>
    </citation>
    <scope>TISSUE SPECIFICITY</scope>
    <scope>GENE FAMILY</scope>
    <scope>NOMENCLATURE</scope>
</reference>
<reference key="6">
    <citation type="journal article" date="2011" name="Mol. Cells">
        <title>Phylogenetic and expression analysis of RNA-binding proteins with triple RNA recognition motifs in plants.</title>
        <authorList>
            <person name="Peal L."/>
            <person name="Jambunathan N."/>
            <person name="Mahalingam R."/>
        </authorList>
    </citation>
    <scope>GENE FAMILY</scope>
    <source>
        <strain>cv. Columbia</strain>
        <strain>cv. Wassilewskija</strain>
    </source>
</reference>
<dbReference type="EMBL" id="AC007519">
    <property type="protein sequence ID" value="AAD46038.1"/>
    <property type="molecule type" value="Genomic_DNA"/>
</dbReference>
<dbReference type="EMBL" id="CP002684">
    <property type="protein sequence ID" value="AEE32173.1"/>
    <property type="molecule type" value="Genomic_DNA"/>
</dbReference>
<dbReference type="EMBL" id="CP002684">
    <property type="protein sequence ID" value="AEE32174.1"/>
    <property type="molecule type" value="Genomic_DNA"/>
</dbReference>
<dbReference type="EMBL" id="AF344325">
    <property type="protein sequence ID" value="AAK06876.1"/>
    <property type="molecule type" value="mRNA"/>
</dbReference>
<dbReference type="EMBL" id="AY035180">
    <property type="protein sequence ID" value="AAK59684.1"/>
    <property type="molecule type" value="mRNA"/>
</dbReference>
<dbReference type="EMBL" id="AY062960">
    <property type="protein sequence ID" value="AAL33806.1"/>
    <property type="molecule type" value="mRNA"/>
</dbReference>
<dbReference type="EMBL" id="BX813781">
    <property type="status" value="NOT_ANNOTATED_CDS"/>
    <property type="molecule type" value="mRNA"/>
</dbReference>
<dbReference type="PIR" id="B96515">
    <property type="entry name" value="B96515"/>
</dbReference>
<dbReference type="RefSeq" id="NP_175180.1">
    <molecule id="Q9SX79-1"/>
    <property type="nucleotide sequence ID" value="NM_103642.3"/>
</dbReference>
<dbReference type="RefSeq" id="NP_973984.1">
    <molecule id="Q9SX79-2"/>
    <property type="nucleotide sequence ID" value="NM_202255.2"/>
</dbReference>
<dbReference type="SMR" id="Q9SX79"/>
<dbReference type="BioGRID" id="26382">
    <property type="interactions" value="1"/>
</dbReference>
<dbReference type="FunCoup" id="Q9SX79">
    <property type="interactions" value="324"/>
</dbReference>
<dbReference type="STRING" id="3702.Q9SX79"/>
<dbReference type="GlyGen" id="Q9SX79">
    <property type="glycosylation" value="1 site"/>
</dbReference>
<dbReference type="iPTMnet" id="Q9SX79"/>
<dbReference type="PaxDb" id="3702-AT1G47490.1"/>
<dbReference type="ProteomicsDB" id="236220">
    <molecule id="Q9SX79-1"/>
</dbReference>
<dbReference type="EnsemblPlants" id="AT1G47490.1">
    <molecule id="Q9SX79-1"/>
    <property type="protein sequence ID" value="AT1G47490.1"/>
    <property type="gene ID" value="AT1G47490"/>
</dbReference>
<dbReference type="EnsemblPlants" id="AT1G47490.2">
    <molecule id="Q9SX79-2"/>
    <property type="protein sequence ID" value="AT1G47490.2"/>
    <property type="gene ID" value="AT1G47490"/>
</dbReference>
<dbReference type="GeneID" id="841157"/>
<dbReference type="Gramene" id="AT1G47490.1">
    <molecule id="Q9SX79-1"/>
    <property type="protein sequence ID" value="AT1G47490.1"/>
    <property type="gene ID" value="AT1G47490"/>
</dbReference>
<dbReference type="Gramene" id="AT1G47490.2">
    <molecule id="Q9SX79-2"/>
    <property type="protein sequence ID" value="AT1G47490.2"/>
    <property type="gene ID" value="AT1G47490"/>
</dbReference>
<dbReference type="KEGG" id="ath:AT1G47490"/>
<dbReference type="Araport" id="AT1G47490"/>
<dbReference type="TAIR" id="AT1G47490">
    <property type="gene designation" value="RBP47C"/>
</dbReference>
<dbReference type="eggNOG" id="KOG0118">
    <property type="taxonomic scope" value="Eukaryota"/>
</dbReference>
<dbReference type="HOGENOM" id="CLU_016304_2_1_1"/>
<dbReference type="InParanoid" id="Q9SX79"/>
<dbReference type="OMA" id="EFDSHDI"/>
<dbReference type="PhylomeDB" id="Q9SX79"/>
<dbReference type="CD-CODE" id="24475C75">
    <property type="entry name" value="Stress granule"/>
</dbReference>
<dbReference type="PRO" id="PR:Q9SX79"/>
<dbReference type="Proteomes" id="UP000006548">
    <property type="component" value="Chromosome 1"/>
</dbReference>
<dbReference type="ExpressionAtlas" id="Q9SX79">
    <property type="expression patterns" value="baseline and differential"/>
</dbReference>
<dbReference type="GO" id="GO:0010494">
    <property type="term" value="C:cytoplasmic stress granule"/>
    <property type="evidence" value="ECO:0000250"/>
    <property type="project" value="UniProtKB"/>
</dbReference>
<dbReference type="GO" id="GO:0005634">
    <property type="term" value="C:nucleus"/>
    <property type="evidence" value="ECO:0000250"/>
    <property type="project" value="UniProtKB"/>
</dbReference>
<dbReference type="GO" id="GO:0003729">
    <property type="term" value="F:mRNA binding"/>
    <property type="evidence" value="ECO:0000314"/>
    <property type="project" value="TAIR"/>
</dbReference>
<dbReference type="GO" id="GO:0008143">
    <property type="term" value="F:poly(A) binding"/>
    <property type="evidence" value="ECO:0000250"/>
    <property type="project" value="UniProtKB"/>
</dbReference>
<dbReference type="GO" id="GO:0034605">
    <property type="term" value="P:cellular response to heat"/>
    <property type="evidence" value="ECO:0000250"/>
    <property type="project" value="UniProtKB"/>
</dbReference>
<dbReference type="GO" id="GO:0006397">
    <property type="term" value="P:mRNA processing"/>
    <property type="evidence" value="ECO:0007669"/>
    <property type="project" value="UniProtKB-KW"/>
</dbReference>
<dbReference type="CDD" id="cd12344">
    <property type="entry name" value="RRM1_SECp43_like"/>
    <property type="match status" value="1"/>
</dbReference>
<dbReference type="CDD" id="cd12345">
    <property type="entry name" value="RRM2_SECp43_like"/>
    <property type="match status" value="1"/>
</dbReference>
<dbReference type="CDD" id="cd12346">
    <property type="entry name" value="RRM3_NGR1_NAM8_like"/>
    <property type="match status" value="1"/>
</dbReference>
<dbReference type="FunFam" id="3.30.70.330:FF:000395">
    <property type="entry name" value="Polyadenylate-binding protein RBP47"/>
    <property type="match status" value="1"/>
</dbReference>
<dbReference type="FunFam" id="3.30.70.330:FF:000103">
    <property type="entry name" value="Polyadenylate-binding protein RBP47B"/>
    <property type="match status" value="1"/>
</dbReference>
<dbReference type="FunFam" id="3.30.70.330:FF:000144">
    <property type="entry name" value="Polyadenylate-binding protein RBP47B"/>
    <property type="match status" value="1"/>
</dbReference>
<dbReference type="Gene3D" id="3.30.70.330">
    <property type="match status" value="3"/>
</dbReference>
<dbReference type="InterPro" id="IPR012677">
    <property type="entry name" value="Nucleotide-bd_a/b_plait_sf"/>
</dbReference>
<dbReference type="InterPro" id="IPR035979">
    <property type="entry name" value="RBD_domain_sf"/>
</dbReference>
<dbReference type="InterPro" id="IPR050825">
    <property type="entry name" value="RBM42_RBP45_47-like"/>
</dbReference>
<dbReference type="InterPro" id="IPR000504">
    <property type="entry name" value="RRM_dom"/>
</dbReference>
<dbReference type="PANTHER" id="PTHR47640:SF16">
    <property type="entry name" value="POLYADENYLATE-BINDING PROTEIN RBP47C-RELATED"/>
    <property type="match status" value="1"/>
</dbReference>
<dbReference type="PANTHER" id="PTHR47640">
    <property type="entry name" value="TRNA SELENOCYSTEINE 1-ASSOCIATED PROTEIN 1-RELATED-RELATED"/>
    <property type="match status" value="1"/>
</dbReference>
<dbReference type="Pfam" id="PF00076">
    <property type="entry name" value="RRM_1"/>
    <property type="match status" value="3"/>
</dbReference>
<dbReference type="SMART" id="SM00360">
    <property type="entry name" value="RRM"/>
    <property type="match status" value="3"/>
</dbReference>
<dbReference type="SUPFAM" id="SSF54928">
    <property type="entry name" value="RNA-binding domain, RBD"/>
    <property type="match status" value="2"/>
</dbReference>
<dbReference type="PROSITE" id="PS50102">
    <property type="entry name" value="RRM"/>
    <property type="match status" value="3"/>
</dbReference>
<comment type="function">
    <text evidence="1">Heterogeneous nuclear ribonucleoprotein (hnRNP)-protein binding the poly(A) tail of mRNA and probably involved in some steps of pre-mRNA maturation.</text>
</comment>
<comment type="subunit">
    <text evidence="1">Interacts with the poly(A) tail of mRNA in nucleus.</text>
</comment>
<comment type="subcellular location">
    <subcellularLocation>
        <location evidence="1">Nucleus</location>
    </subcellularLocation>
    <subcellularLocation>
        <location evidence="1">Cytoplasmic granule</location>
    </subcellularLocation>
</comment>
<comment type="alternative products">
    <event type="alternative splicing"/>
    <isoform>
        <id>Q9SX79-1</id>
        <name>1</name>
        <sequence type="displayed"/>
    </isoform>
    <isoform>
        <id>Q9SX79-2</id>
        <name>2</name>
        <sequence type="described" ref="VSP_042356 VSP_042357"/>
    </isoform>
</comment>
<comment type="tissue specificity">
    <text evidence="4">Expressed in leaves, stems, flowers, and seedlings.</text>
</comment>
<comment type="similarity">
    <text evidence="6">Belongs to the polyadenylate-binding RBP47 family.</text>
</comment>
<evidence type="ECO:0000250" key="1"/>
<evidence type="ECO:0000255" key="2">
    <source>
        <dbReference type="PROSITE-ProRule" id="PRU00176"/>
    </source>
</evidence>
<evidence type="ECO:0000256" key="3">
    <source>
        <dbReference type="SAM" id="MobiDB-lite"/>
    </source>
</evidence>
<evidence type="ECO:0000269" key="4">
    <source>
    </source>
</evidence>
<evidence type="ECO:0000303" key="5">
    <source>
    </source>
</evidence>
<evidence type="ECO:0000305" key="6"/>
<sequence length="432" mass="48498">MADVKIQSESESSDSHPVVDNQPPPPPPPPQQPAKEEENQPKTSPTPPPHWMRYPPTVIIPHQMMYAPPPFPPYHQYPNHHHLHHQSRGNKHQNAFNGENKTIWVGDLHHWMDEAYLNSSFASGDEREIVSVKVIRNKNNGLSEGYGFVEFESHDVADKVLREFNGTTMPNTDQPFRLNWASFSTGEKRLENNGPDLSIFVGDLSPDVSDNLLHETFSEKYPSVKAAKVVLDANTGRSKGYGFVRFGDENERTKAMTEMNGVKCSSRAMRIGPATPRKTNGYQQQGGYMPNGTLTRPEGDIMNTTIFVGGLDSSVTDEDLKQPFNEFGEIVSVKIPVGKGCGFVQFVNRPNAEEALEKLNGTVIGKQTVRLSWGRNPANKQPRDKYGNQWVDPYYGGQFYNGYGYMVPQPDPRMYPAAPYYPMYGGHQQQVS</sequence>
<name>RB47C_ARATH</name>
<accession>Q9SX79</accession>
<accession>F4HT91</accession>
<organism>
    <name type="scientific">Arabidopsis thaliana</name>
    <name type="common">Mouse-ear cress</name>
    <dbReference type="NCBI Taxonomy" id="3702"/>
    <lineage>
        <taxon>Eukaryota</taxon>
        <taxon>Viridiplantae</taxon>
        <taxon>Streptophyta</taxon>
        <taxon>Embryophyta</taxon>
        <taxon>Tracheophyta</taxon>
        <taxon>Spermatophyta</taxon>
        <taxon>Magnoliopsida</taxon>
        <taxon>eudicotyledons</taxon>
        <taxon>Gunneridae</taxon>
        <taxon>Pentapetalae</taxon>
        <taxon>rosids</taxon>
        <taxon>malvids</taxon>
        <taxon>Brassicales</taxon>
        <taxon>Brassicaceae</taxon>
        <taxon>Camelineae</taxon>
        <taxon>Arabidopsis</taxon>
    </lineage>
</organism>
<protein>
    <recommendedName>
        <fullName>Polyadenylate-binding protein RBP47C</fullName>
        <shortName>Poly(A)-binding protein RBP47C</shortName>
    </recommendedName>
    <alternativeName>
        <fullName>RNA-binding protein 47C</fullName>
        <shortName>AtRBP47C</shortName>
    </alternativeName>
</protein>
<keyword id="KW-0025">Alternative splicing</keyword>
<keyword id="KW-0507">mRNA processing</keyword>
<keyword id="KW-0539">Nucleus</keyword>
<keyword id="KW-1185">Reference proteome</keyword>
<keyword id="KW-0677">Repeat</keyword>
<keyword id="KW-0694">RNA-binding</keyword>